<comment type="function">
    <text evidence="1">Involved in protein precursor import into chloroplasts. May be part of an intermediate translocation complex acting as a protein-conducting channel at the inner envelope.</text>
</comment>
<comment type="subunit">
    <text evidence="1">Part of the Tic complex.</text>
</comment>
<comment type="subcellular location">
    <subcellularLocation>
        <location evidence="1">Plastid</location>
        <location evidence="1">Chloroplast inner membrane</location>
        <topology evidence="2">Multi-pass membrane protein</topology>
    </subcellularLocation>
</comment>
<comment type="similarity">
    <text evidence="3">Belongs to the TIC214 family.</text>
</comment>
<evidence type="ECO:0000250" key="1">
    <source>
        <dbReference type="UniProtKB" id="P56785"/>
    </source>
</evidence>
<evidence type="ECO:0000255" key="2"/>
<evidence type="ECO:0000305" key="3"/>
<name>TI214_MESVI</name>
<sequence>MNYLISSLPFPNNFLNSSHSPFVFGLICGSLLGTSMNVGSFISLRRLIIQGIPAGVVSYLGSAISETFFLFLILFGYIGVIEKWFTLEPSLTFIITVFCADTIIGFLLDNRLKIVSLSQTTDLLKIFLCNAVIVFGNPGSTWGATSLITSIEGFQFRENSLFLFGVFLGIFVIGCGIGFLILALTNLWMIQSSKTFRSLIYRSNKIISHLALCILILSTIYYHWQVYIGLSLSTSSMPMITITKHDREPFYTDDESQMSWNRYKNKVERKNQPHPMKTLGGLPIKQFGQWFKKNVITSNPEDLDARGLPRERTKTGDYVPNYETMQAIRNKKWFSRSKNYLYIKEKIFSLLSINPMKVKFLEHSRRDMDLFYLGDKKSTRITITEMSKSDYNQMLENRKQRIQNIINRRN</sequence>
<accession>Q9MUM0</accession>
<protein>
    <recommendedName>
        <fullName evidence="1">Protein TIC 214</fullName>
    </recommendedName>
    <alternativeName>
        <fullName evidence="1">Translocon at the inner envelope membrane of chloroplasts 214</fullName>
        <shortName evidence="1">AtTIC214</shortName>
    </alternativeName>
</protein>
<dbReference type="EMBL" id="AF166114">
    <property type="protein sequence ID" value="AAF43878.1"/>
    <property type="molecule type" value="Genomic_DNA"/>
</dbReference>
<dbReference type="RefSeq" id="NP_038440.1">
    <property type="nucleotide sequence ID" value="NC_002186.1"/>
</dbReference>
<dbReference type="GeneID" id="800970"/>
<dbReference type="GO" id="GO:0009706">
    <property type="term" value="C:chloroplast inner membrane"/>
    <property type="evidence" value="ECO:0007669"/>
    <property type="project" value="UniProtKB-SubCell"/>
</dbReference>
<dbReference type="GO" id="GO:0015031">
    <property type="term" value="P:protein transport"/>
    <property type="evidence" value="ECO:0007669"/>
    <property type="project" value="UniProtKB-KW"/>
</dbReference>
<keyword id="KW-0150">Chloroplast</keyword>
<keyword id="KW-0472">Membrane</keyword>
<keyword id="KW-0934">Plastid</keyword>
<keyword id="KW-1001">Plastid inner membrane</keyword>
<keyword id="KW-0653">Protein transport</keyword>
<keyword id="KW-0812">Transmembrane</keyword>
<keyword id="KW-1133">Transmembrane helix</keyword>
<keyword id="KW-0813">Transport</keyword>
<geneLocation type="chloroplast"/>
<reference key="1">
    <citation type="journal article" date="2000" name="Nature">
        <title>Ancestral chloroplast genome in Mesostigma viride reveals an early branch of green plant evolution.</title>
        <authorList>
            <person name="Lemieux C."/>
            <person name="Otis C."/>
            <person name="Turmel M."/>
        </authorList>
    </citation>
    <scope>NUCLEOTIDE SEQUENCE [LARGE SCALE GENOMIC DNA]</scope>
    <source>
        <strain>NIES-296 / KY-14 / CCMP 2046</strain>
    </source>
</reference>
<organism>
    <name type="scientific">Mesostigma viride</name>
    <name type="common">Green alga</name>
    <dbReference type="NCBI Taxonomy" id="41882"/>
    <lineage>
        <taxon>Eukaryota</taxon>
        <taxon>Viridiplantae</taxon>
        <taxon>Streptophyta</taxon>
        <taxon>Mesostigmatophyceae</taxon>
        <taxon>Mesostigmatales</taxon>
        <taxon>Mesostigmataceae</taxon>
        <taxon>Mesostigma</taxon>
    </lineage>
</organism>
<gene>
    <name evidence="1" type="primary">TIC214</name>
    <name type="synonym">ycf1</name>
</gene>
<proteinExistence type="inferred from homology"/>
<feature type="chain" id="PRO_0000217302" description="Protein TIC 214">
    <location>
        <begin position="1"/>
        <end position="410"/>
    </location>
</feature>
<feature type="transmembrane region" description="Helical" evidence="2">
    <location>
        <begin position="22"/>
        <end position="42"/>
    </location>
</feature>
<feature type="transmembrane region" description="Helical" evidence="2">
    <location>
        <begin position="61"/>
        <end position="81"/>
    </location>
</feature>
<feature type="transmembrane region" description="Helical" evidence="2">
    <location>
        <begin position="87"/>
        <end position="107"/>
    </location>
</feature>
<feature type="transmembrane region" description="Helical" evidence="2">
    <location>
        <begin position="131"/>
        <end position="151"/>
    </location>
</feature>
<feature type="transmembrane region" description="Helical" evidence="2">
    <location>
        <begin position="161"/>
        <end position="181"/>
    </location>
</feature>
<feature type="transmembrane region" description="Helical" evidence="2">
    <location>
        <begin position="210"/>
        <end position="230"/>
    </location>
</feature>